<proteinExistence type="inferred from homology"/>
<sequence>MPGLLRARRTDAVRLDAVTTFHLRHGVEVADALRVGRPVVALESTIVSHGLPRPDNLRVAREIEQTVRDAGAVPATIGMVAGQLVVGLDDAELTRLATVDDVAKLSVRDLAVAAATDADGATTVAATSAVAAAAGIRVFATGGLGGVHREAAQSFDESADLTTLARTPIAVVCAGVKSILDSGATLERLETLGVGVVGYRTRRFPGFYLTDGGFDLDWSVDSPEQVAAALAAQEQHGLHSGGLVVANPLPTDEQLDPALHDRTLAEGLMLLRREGVTGKAVTPFLLAHFHSATEGASLAVNIRIILRNADLAAQIAVASAARQA</sequence>
<dbReference type="EC" id="4.2.1.70" evidence="1"/>
<dbReference type="EMBL" id="CP000667">
    <property type="protein sequence ID" value="ABP53937.1"/>
    <property type="molecule type" value="Genomic_DNA"/>
</dbReference>
<dbReference type="SMR" id="A4X4Y7"/>
<dbReference type="STRING" id="369723.Strop_1471"/>
<dbReference type="KEGG" id="stp:Strop_1471"/>
<dbReference type="eggNOG" id="COG2313">
    <property type="taxonomic scope" value="Bacteria"/>
</dbReference>
<dbReference type="HOGENOM" id="CLU_012201_0_1_11"/>
<dbReference type="Proteomes" id="UP000000235">
    <property type="component" value="Chromosome"/>
</dbReference>
<dbReference type="GO" id="GO:0005737">
    <property type="term" value="C:cytoplasm"/>
    <property type="evidence" value="ECO:0007669"/>
    <property type="project" value="TreeGrafter"/>
</dbReference>
<dbReference type="GO" id="GO:0016798">
    <property type="term" value="F:hydrolase activity, acting on glycosyl bonds"/>
    <property type="evidence" value="ECO:0007669"/>
    <property type="project" value="UniProtKB-KW"/>
</dbReference>
<dbReference type="GO" id="GO:0046872">
    <property type="term" value="F:metal ion binding"/>
    <property type="evidence" value="ECO:0007669"/>
    <property type="project" value="UniProtKB-KW"/>
</dbReference>
<dbReference type="GO" id="GO:0004730">
    <property type="term" value="F:pseudouridylate synthase activity"/>
    <property type="evidence" value="ECO:0007669"/>
    <property type="project" value="UniProtKB-UniRule"/>
</dbReference>
<dbReference type="GO" id="GO:0046113">
    <property type="term" value="P:nucleobase catabolic process"/>
    <property type="evidence" value="ECO:0007669"/>
    <property type="project" value="UniProtKB-UniRule"/>
</dbReference>
<dbReference type="Gene3D" id="3.40.1790.10">
    <property type="entry name" value="Indigoidine synthase domain"/>
    <property type="match status" value="1"/>
</dbReference>
<dbReference type="HAMAP" id="MF_01876">
    <property type="entry name" value="PsiMP_glycosidase"/>
    <property type="match status" value="1"/>
</dbReference>
<dbReference type="InterPro" id="IPR022830">
    <property type="entry name" value="Indigdn_synthA-like"/>
</dbReference>
<dbReference type="InterPro" id="IPR007342">
    <property type="entry name" value="PsuG"/>
</dbReference>
<dbReference type="PANTHER" id="PTHR42909:SF1">
    <property type="entry name" value="CARBOHYDRATE KINASE PFKB DOMAIN-CONTAINING PROTEIN"/>
    <property type="match status" value="1"/>
</dbReference>
<dbReference type="PANTHER" id="PTHR42909">
    <property type="entry name" value="ZGC:136858"/>
    <property type="match status" value="1"/>
</dbReference>
<dbReference type="Pfam" id="PF04227">
    <property type="entry name" value="Indigoidine_A"/>
    <property type="match status" value="1"/>
</dbReference>
<dbReference type="SUPFAM" id="SSF110581">
    <property type="entry name" value="Indigoidine synthase A-like"/>
    <property type="match status" value="1"/>
</dbReference>
<accession>A4X4Y7</accession>
<evidence type="ECO:0000255" key="1">
    <source>
        <dbReference type="HAMAP-Rule" id="MF_01876"/>
    </source>
</evidence>
<organism>
    <name type="scientific">Salinispora tropica (strain ATCC BAA-916 / DSM 44818 / JCM 13857 / NBRC 105044 / CNB-440)</name>
    <dbReference type="NCBI Taxonomy" id="369723"/>
    <lineage>
        <taxon>Bacteria</taxon>
        <taxon>Bacillati</taxon>
        <taxon>Actinomycetota</taxon>
        <taxon>Actinomycetes</taxon>
        <taxon>Micromonosporales</taxon>
        <taxon>Micromonosporaceae</taxon>
        <taxon>Salinispora</taxon>
    </lineage>
</organism>
<name>PSUG_SALTO</name>
<comment type="function">
    <text evidence="1">Catalyzes the reversible cleavage of pseudouridine 5'-phosphate (PsiMP) to ribose 5-phosphate and uracil. Functions biologically in the cleavage direction, as part of a pseudouridine degradation pathway.</text>
</comment>
<comment type="catalytic activity">
    <reaction evidence="1">
        <text>D-ribose 5-phosphate + uracil = psi-UMP + H2O</text>
        <dbReference type="Rhea" id="RHEA:18337"/>
        <dbReference type="ChEBI" id="CHEBI:15377"/>
        <dbReference type="ChEBI" id="CHEBI:17568"/>
        <dbReference type="ChEBI" id="CHEBI:58380"/>
        <dbReference type="ChEBI" id="CHEBI:78346"/>
        <dbReference type="EC" id="4.2.1.70"/>
    </reaction>
</comment>
<comment type="cofactor">
    <cofactor evidence="1">
        <name>Mn(2+)</name>
        <dbReference type="ChEBI" id="CHEBI:29035"/>
    </cofactor>
    <text evidence="1">Binds 1 Mn(2+) ion per subunit.</text>
</comment>
<comment type="subunit">
    <text evidence="1">Homotrimer.</text>
</comment>
<comment type="similarity">
    <text evidence="1">Belongs to the pseudouridine-5'-phosphate glycosidase family.</text>
</comment>
<gene>
    <name evidence="1" type="primary">psuG</name>
    <name type="ordered locus">Strop_1471</name>
</gene>
<reference key="1">
    <citation type="journal article" date="2007" name="Proc. Natl. Acad. Sci. U.S.A.">
        <title>Genome sequencing reveals complex secondary metabolome in the marine actinomycete Salinispora tropica.</title>
        <authorList>
            <person name="Udwary D.W."/>
            <person name="Zeigler L."/>
            <person name="Asolkar R.N."/>
            <person name="Singan V."/>
            <person name="Lapidus A."/>
            <person name="Fenical W."/>
            <person name="Jensen P.R."/>
            <person name="Moore B.S."/>
        </authorList>
    </citation>
    <scope>NUCLEOTIDE SEQUENCE [LARGE SCALE GENOMIC DNA]</scope>
    <source>
        <strain>ATCC BAA-916 / DSM 44818 / JCM 13857 / NBRC 105044 / CNB-440</strain>
    </source>
</reference>
<feature type="chain" id="PRO_0000390546" description="Pseudouridine-5'-phosphate glycosidase">
    <location>
        <begin position="1"/>
        <end position="324"/>
    </location>
</feature>
<feature type="active site" description="Proton donor" evidence="1">
    <location>
        <position position="43"/>
    </location>
</feature>
<feature type="active site" description="Nucleophile" evidence="1">
    <location>
        <position position="177"/>
    </location>
</feature>
<feature type="binding site" evidence="1">
    <location>
        <position position="104"/>
    </location>
    <ligand>
        <name>substrate</name>
    </ligand>
</feature>
<feature type="binding site" evidence="1">
    <location>
        <position position="124"/>
    </location>
    <ligand>
        <name>substrate</name>
    </ligand>
</feature>
<feature type="binding site" evidence="1">
    <location>
        <position position="156"/>
    </location>
    <ligand>
        <name>Mn(2+)</name>
        <dbReference type="ChEBI" id="CHEBI:29035"/>
    </ligand>
</feature>
<feature type="binding site" evidence="1">
    <location>
        <begin position="158"/>
        <end position="160"/>
    </location>
    <ligand>
        <name>substrate</name>
    </ligand>
</feature>
<keyword id="KW-0326">Glycosidase</keyword>
<keyword id="KW-0378">Hydrolase</keyword>
<keyword id="KW-0456">Lyase</keyword>
<keyword id="KW-0464">Manganese</keyword>
<keyword id="KW-0479">Metal-binding</keyword>
<keyword id="KW-1185">Reference proteome</keyword>
<protein>
    <recommendedName>
        <fullName evidence="1">Pseudouridine-5'-phosphate glycosidase</fullName>
        <shortName evidence="1">PsiMP glycosidase</shortName>
        <ecNumber evidence="1">4.2.1.70</ecNumber>
    </recommendedName>
</protein>